<comment type="function">
    <text evidence="1">Responsible for channeling the electrons from the oxidation of dihydroorotate from the FMN redox center in the PyrD type B subunit to the ultimate electron acceptor NAD(+).</text>
</comment>
<comment type="cofactor">
    <cofactor evidence="1">
        <name>[2Fe-2S] cluster</name>
        <dbReference type="ChEBI" id="CHEBI:190135"/>
    </cofactor>
    <text evidence="1">Binds 1 [2Fe-2S] cluster per subunit.</text>
</comment>
<comment type="cofactor">
    <cofactor evidence="1">
        <name>FAD</name>
        <dbReference type="ChEBI" id="CHEBI:57692"/>
    </cofactor>
    <text evidence="1">Binds 1 FAD per subunit.</text>
</comment>
<comment type="pathway">
    <text evidence="1">Pyrimidine metabolism; UMP biosynthesis via de novo pathway; orotate from (S)-dihydroorotate (NAD(+) route): step 1/1.</text>
</comment>
<comment type="subunit">
    <text evidence="1">Heterotetramer of 2 PyrK and 2 PyrD type B subunits.</text>
</comment>
<comment type="similarity">
    <text evidence="1">Belongs to the PyrK family.</text>
</comment>
<gene>
    <name evidence="1" type="primary">pyrK</name>
    <name type="ordered locus">PYRAB17530</name>
    <name type="ORF">PAB1150</name>
</gene>
<sequence>MLRRVMIKETWEVAKNVRAFRFDEKLDFIPGQFIMLWLPGINEKPFSLADKDLIVVKKVGPFTSKLFKLEEGDYVWIRGPYGNGFKSVEGKVALVAGGIGIPPIYALAKYGNLEEKVLIYGARSKEELATLDIENYVDEVVITTDDGSAGIKGFPTDVLARRKVEFSQVYACGPEVMLAKVLEIMNYERTQISAERYMKCGIGICGSCALGPYLVCRDGPVFTGEQLKGTEIGKFSRLPDGRIKSLR</sequence>
<dbReference type="EMBL" id="AJ248288">
    <property type="protein sequence ID" value="CAB50658.1"/>
    <property type="molecule type" value="Genomic_DNA"/>
</dbReference>
<dbReference type="EMBL" id="HE613800">
    <property type="protein sequence ID" value="CCE71227.1"/>
    <property type="molecule type" value="Genomic_DNA"/>
</dbReference>
<dbReference type="PIR" id="D75027">
    <property type="entry name" value="D75027"/>
</dbReference>
<dbReference type="RefSeq" id="WP_010868872.1">
    <property type="nucleotide sequence ID" value="NC_000868.1"/>
</dbReference>
<dbReference type="SMR" id="Q9UXV5"/>
<dbReference type="STRING" id="272844.PAB1150"/>
<dbReference type="KEGG" id="pab:PAB1150"/>
<dbReference type="PATRIC" id="fig|272844.11.peg.1872"/>
<dbReference type="eggNOG" id="arCOG02199">
    <property type="taxonomic scope" value="Archaea"/>
</dbReference>
<dbReference type="HOGENOM" id="CLU_003827_1_1_2"/>
<dbReference type="OrthoDB" id="35401at2157"/>
<dbReference type="PhylomeDB" id="Q9UXV5"/>
<dbReference type="UniPathway" id="UPA00070">
    <property type="reaction ID" value="UER00945"/>
</dbReference>
<dbReference type="Proteomes" id="UP000000810">
    <property type="component" value="Chromosome"/>
</dbReference>
<dbReference type="Proteomes" id="UP000009139">
    <property type="component" value="Chromosome"/>
</dbReference>
<dbReference type="GO" id="GO:0051537">
    <property type="term" value="F:2 iron, 2 sulfur cluster binding"/>
    <property type="evidence" value="ECO:0007669"/>
    <property type="project" value="UniProtKB-KW"/>
</dbReference>
<dbReference type="GO" id="GO:0009055">
    <property type="term" value="F:electron transfer activity"/>
    <property type="evidence" value="ECO:0007669"/>
    <property type="project" value="UniProtKB-UniRule"/>
</dbReference>
<dbReference type="GO" id="GO:0050660">
    <property type="term" value="F:flavin adenine dinucleotide binding"/>
    <property type="evidence" value="ECO:0007669"/>
    <property type="project" value="InterPro"/>
</dbReference>
<dbReference type="GO" id="GO:0046872">
    <property type="term" value="F:metal ion binding"/>
    <property type="evidence" value="ECO:0007669"/>
    <property type="project" value="UniProtKB-KW"/>
</dbReference>
<dbReference type="GO" id="GO:0016491">
    <property type="term" value="F:oxidoreductase activity"/>
    <property type="evidence" value="ECO:0007669"/>
    <property type="project" value="InterPro"/>
</dbReference>
<dbReference type="GO" id="GO:0044205">
    <property type="term" value="P:'de novo' UMP biosynthetic process"/>
    <property type="evidence" value="ECO:0007669"/>
    <property type="project" value="UniProtKB-UniRule"/>
</dbReference>
<dbReference type="CDD" id="cd06220">
    <property type="entry name" value="DHOD_e_trans_like2"/>
    <property type="match status" value="1"/>
</dbReference>
<dbReference type="Gene3D" id="2.10.240.10">
    <property type="entry name" value="Dihydroorotate dehydrogenase, electron transfer subunit"/>
    <property type="match status" value="1"/>
</dbReference>
<dbReference type="Gene3D" id="3.40.50.80">
    <property type="entry name" value="Nucleotide-binding domain of ferredoxin-NADP reductase (FNR) module"/>
    <property type="match status" value="1"/>
</dbReference>
<dbReference type="Gene3D" id="2.40.30.10">
    <property type="entry name" value="Translation factors"/>
    <property type="match status" value="1"/>
</dbReference>
<dbReference type="HAMAP" id="MF_01211">
    <property type="entry name" value="DHODB_Fe_S_bind"/>
    <property type="match status" value="1"/>
</dbReference>
<dbReference type="InterPro" id="IPR012165">
    <property type="entry name" value="Cyt_c3_hydrogenase_gsu"/>
</dbReference>
<dbReference type="InterPro" id="IPR037117">
    <property type="entry name" value="Dihydroorotate_DH_ele_sf"/>
</dbReference>
<dbReference type="InterPro" id="IPR019480">
    <property type="entry name" value="Dihydroorotate_DH_Fe-S-bd"/>
</dbReference>
<dbReference type="InterPro" id="IPR023455">
    <property type="entry name" value="Dihydroorotate_DHASE_ETsu"/>
</dbReference>
<dbReference type="InterPro" id="IPR017927">
    <property type="entry name" value="FAD-bd_FR_type"/>
</dbReference>
<dbReference type="InterPro" id="IPR039261">
    <property type="entry name" value="FNR_nucleotide-bd"/>
</dbReference>
<dbReference type="InterPro" id="IPR050353">
    <property type="entry name" value="PyrK_electron_transfer"/>
</dbReference>
<dbReference type="InterPro" id="IPR017938">
    <property type="entry name" value="Riboflavin_synthase-like_b-brl"/>
</dbReference>
<dbReference type="NCBIfam" id="NF000796">
    <property type="entry name" value="PRK00054.1-1"/>
    <property type="match status" value="1"/>
</dbReference>
<dbReference type="PANTHER" id="PTHR43513">
    <property type="entry name" value="DIHYDROOROTATE DEHYDROGENASE B (NAD(+)), ELECTRON TRANSFER SUBUNIT"/>
    <property type="match status" value="1"/>
</dbReference>
<dbReference type="PANTHER" id="PTHR43513:SF3">
    <property type="entry name" value="DIHYDROOROTATE DEHYDROGENASE B (NAD(+)), ELECTRON TRANSFER SUBUNIT-RELATED"/>
    <property type="match status" value="1"/>
</dbReference>
<dbReference type="Pfam" id="PF10418">
    <property type="entry name" value="DHODB_Fe-S_bind"/>
    <property type="match status" value="1"/>
</dbReference>
<dbReference type="PIRSF" id="PIRSF006816">
    <property type="entry name" value="Cyc3_hyd_g"/>
    <property type="match status" value="1"/>
</dbReference>
<dbReference type="SUPFAM" id="SSF52343">
    <property type="entry name" value="Ferredoxin reductase-like, C-terminal NADP-linked domain"/>
    <property type="match status" value="1"/>
</dbReference>
<dbReference type="SUPFAM" id="SSF63380">
    <property type="entry name" value="Riboflavin synthase domain-like"/>
    <property type="match status" value="1"/>
</dbReference>
<dbReference type="PROSITE" id="PS00197">
    <property type="entry name" value="2FE2S_FER_1"/>
    <property type="match status" value="1"/>
</dbReference>
<dbReference type="PROSITE" id="PS51384">
    <property type="entry name" value="FAD_FR"/>
    <property type="match status" value="1"/>
</dbReference>
<protein>
    <recommendedName>
        <fullName evidence="1">Probable dihydroorotate dehydrogenase B (NAD(+)), electron transfer subunit</fullName>
    </recommendedName>
    <alternativeName>
        <fullName evidence="1">Dihydroorotate oxidase B, electron transfer subunit</fullName>
    </alternativeName>
</protein>
<reference key="1">
    <citation type="journal article" date="2003" name="Mol. Microbiol.">
        <title>An integrated analysis of the genome of the hyperthermophilic archaeon Pyrococcus abyssi.</title>
        <authorList>
            <person name="Cohen G.N."/>
            <person name="Barbe V."/>
            <person name="Flament D."/>
            <person name="Galperin M."/>
            <person name="Heilig R."/>
            <person name="Lecompte O."/>
            <person name="Poch O."/>
            <person name="Prieur D."/>
            <person name="Querellou J."/>
            <person name="Ripp R."/>
            <person name="Thierry J.-C."/>
            <person name="Van der Oost J."/>
            <person name="Weissenbach J."/>
            <person name="Zivanovic Y."/>
            <person name="Forterre P."/>
        </authorList>
    </citation>
    <scope>NUCLEOTIDE SEQUENCE [LARGE SCALE GENOMIC DNA]</scope>
    <source>
        <strain>GE5 / Orsay</strain>
    </source>
</reference>
<reference key="2">
    <citation type="journal article" date="2012" name="Curr. Microbiol.">
        <title>Re-annotation of two hyperthermophilic archaea Pyrococcus abyssi GE5 and Pyrococcus furiosus DSM 3638.</title>
        <authorList>
            <person name="Gao J."/>
            <person name="Wang J."/>
        </authorList>
    </citation>
    <scope>GENOME REANNOTATION</scope>
    <source>
        <strain>GE5 / Orsay</strain>
    </source>
</reference>
<name>PYRK_PYRAB</name>
<organism>
    <name type="scientific">Pyrococcus abyssi (strain GE5 / Orsay)</name>
    <dbReference type="NCBI Taxonomy" id="272844"/>
    <lineage>
        <taxon>Archaea</taxon>
        <taxon>Methanobacteriati</taxon>
        <taxon>Methanobacteriota</taxon>
        <taxon>Thermococci</taxon>
        <taxon>Thermococcales</taxon>
        <taxon>Thermococcaceae</taxon>
        <taxon>Pyrococcus</taxon>
    </lineage>
</organism>
<feature type="chain" id="PRO_0000148379" description="Probable dihydroorotate dehydrogenase B (NAD(+)), electron transfer subunit">
    <location>
        <begin position="1"/>
        <end position="247"/>
    </location>
</feature>
<feature type="domain" description="FAD-binding FR-type" evidence="1">
    <location>
        <begin position="1"/>
        <end position="87"/>
    </location>
</feature>
<feature type="binding site" evidence="1">
    <location>
        <position position="200"/>
    </location>
    <ligand>
        <name>[2Fe-2S] cluster</name>
        <dbReference type="ChEBI" id="CHEBI:190135"/>
    </ligand>
</feature>
<feature type="binding site" evidence="1">
    <location>
        <position position="205"/>
    </location>
    <ligand>
        <name>[2Fe-2S] cluster</name>
        <dbReference type="ChEBI" id="CHEBI:190135"/>
    </ligand>
</feature>
<feature type="binding site" evidence="1">
    <location>
        <position position="208"/>
    </location>
    <ligand>
        <name>[2Fe-2S] cluster</name>
        <dbReference type="ChEBI" id="CHEBI:190135"/>
    </ligand>
</feature>
<feature type="binding site" evidence="1">
    <location>
        <position position="216"/>
    </location>
    <ligand>
        <name>[2Fe-2S] cluster</name>
        <dbReference type="ChEBI" id="CHEBI:190135"/>
    </ligand>
</feature>
<evidence type="ECO:0000255" key="1">
    <source>
        <dbReference type="HAMAP-Rule" id="MF_01211"/>
    </source>
</evidence>
<keyword id="KW-0001">2Fe-2S</keyword>
<keyword id="KW-0249">Electron transport</keyword>
<keyword id="KW-0274">FAD</keyword>
<keyword id="KW-0285">Flavoprotein</keyword>
<keyword id="KW-0408">Iron</keyword>
<keyword id="KW-0411">Iron-sulfur</keyword>
<keyword id="KW-0479">Metal-binding</keyword>
<keyword id="KW-0665">Pyrimidine biosynthesis</keyword>
<keyword id="KW-0813">Transport</keyword>
<proteinExistence type="inferred from homology"/>
<accession>Q9UXV5</accession>
<accession>G8ZKT6</accession>